<comment type="catalytic activity">
    <reaction evidence="1">
        <text>5-amino-1-(5-phospho-D-ribosyl)imidazole-4-carboxylate + L-aspartate + ATP = (2S)-2-[5-amino-1-(5-phospho-beta-D-ribosyl)imidazole-4-carboxamido]succinate + ADP + phosphate + 2 H(+)</text>
        <dbReference type="Rhea" id="RHEA:22628"/>
        <dbReference type="ChEBI" id="CHEBI:15378"/>
        <dbReference type="ChEBI" id="CHEBI:29991"/>
        <dbReference type="ChEBI" id="CHEBI:30616"/>
        <dbReference type="ChEBI" id="CHEBI:43474"/>
        <dbReference type="ChEBI" id="CHEBI:58443"/>
        <dbReference type="ChEBI" id="CHEBI:77657"/>
        <dbReference type="ChEBI" id="CHEBI:456216"/>
        <dbReference type="EC" id="6.3.2.6"/>
    </reaction>
</comment>
<comment type="pathway">
    <text evidence="1">Purine metabolism; IMP biosynthesis via de novo pathway; 5-amino-1-(5-phospho-D-ribosyl)imidazole-4-carboxamide from 5-amino-1-(5-phospho-D-ribosyl)imidazole-4-carboxylate: step 1/2.</text>
</comment>
<comment type="similarity">
    <text evidence="1">Belongs to the SAICAR synthetase family.</text>
</comment>
<gene>
    <name evidence="1" type="primary">purC</name>
    <name type="ordered locus">RALTA_A0525</name>
</gene>
<organism>
    <name type="scientific">Cupriavidus taiwanensis (strain DSM 17343 / BCRC 17206 / CCUG 44338 / CIP 107171 / LMG 19424 / R1)</name>
    <name type="common">Ralstonia taiwanensis (strain LMG 19424)</name>
    <dbReference type="NCBI Taxonomy" id="977880"/>
    <lineage>
        <taxon>Bacteria</taxon>
        <taxon>Pseudomonadati</taxon>
        <taxon>Pseudomonadota</taxon>
        <taxon>Betaproteobacteria</taxon>
        <taxon>Burkholderiales</taxon>
        <taxon>Burkholderiaceae</taxon>
        <taxon>Cupriavidus</taxon>
    </lineage>
</organism>
<feature type="chain" id="PRO_1000095979" description="Phosphoribosylaminoimidazole-succinocarboxamide synthase">
    <location>
        <begin position="1"/>
        <end position="302"/>
    </location>
</feature>
<protein>
    <recommendedName>
        <fullName evidence="1">Phosphoribosylaminoimidazole-succinocarboxamide synthase</fullName>
        <ecNumber evidence="1">6.3.2.6</ecNumber>
    </recommendedName>
    <alternativeName>
        <fullName evidence="1">SAICAR synthetase</fullName>
    </alternativeName>
</protein>
<proteinExistence type="inferred from homology"/>
<evidence type="ECO:0000255" key="1">
    <source>
        <dbReference type="HAMAP-Rule" id="MF_00137"/>
    </source>
</evidence>
<name>PUR7_CUPTR</name>
<dbReference type="EC" id="6.3.2.6" evidence="1"/>
<dbReference type="EMBL" id="CU633749">
    <property type="protein sequence ID" value="CAP63192.1"/>
    <property type="molecule type" value="Genomic_DNA"/>
</dbReference>
<dbReference type="RefSeq" id="WP_012351851.1">
    <property type="nucleotide sequence ID" value="NC_010528.1"/>
</dbReference>
<dbReference type="SMR" id="B2AHE3"/>
<dbReference type="GeneID" id="29760947"/>
<dbReference type="KEGG" id="cti:RALTA_A0525"/>
<dbReference type="eggNOG" id="COG0152">
    <property type="taxonomic scope" value="Bacteria"/>
</dbReference>
<dbReference type="HOGENOM" id="CLU_045637_0_0_4"/>
<dbReference type="BioCyc" id="CTAI977880:RALTA_RS02570-MONOMER"/>
<dbReference type="UniPathway" id="UPA00074">
    <property type="reaction ID" value="UER00131"/>
</dbReference>
<dbReference type="Proteomes" id="UP000001692">
    <property type="component" value="Chromosome 1"/>
</dbReference>
<dbReference type="GO" id="GO:0005737">
    <property type="term" value="C:cytoplasm"/>
    <property type="evidence" value="ECO:0007669"/>
    <property type="project" value="TreeGrafter"/>
</dbReference>
<dbReference type="GO" id="GO:0005524">
    <property type="term" value="F:ATP binding"/>
    <property type="evidence" value="ECO:0007669"/>
    <property type="project" value="UniProtKB-KW"/>
</dbReference>
<dbReference type="GO" id="GO:0004639">
    <property type="term" value="F:phosphoribosylaminoimidazolesuccinocarboxamide synthase activity"/>
    <property type="evidence" value="ECO:0007669"/>
    <property type="project" value="UniProtKB-UniRule"/>
</dbReference>
<dbReference type="GO" id="GO:0006189">
    <property type="term" value="P:'de novo' IMP biosynthetic process"/>
    <property type="evidence" value="ECO:0007669"/>
    <property type="project" value="UniProtKB-UniRule"/>
</dbReference>
<dbReference type="CDD" id="cd01414">
    <property type="entry name" value="SAICAR_synt_Sc"/>
    <property type="match status" value="1"/>
</dbReference>
<dbReference type="FunFam" id="3.30.470.20:FF:000015">
    <property type="entry name" value="Phosphoribosylaminoimidazole-succinocarboxamide synthase"/>
    <property type="match status" value="1"/>
</dbReference>
<dbReference type="Gene3D" id="3.30.470.20">
    <property type="entry name" value="ATP-grasp fold, B domain"/>
    <property type="match status" value="1"/>
</dbReference>
<dbReference type="Gene3D" id="3.30.200.20">
    <property type="entry name" value="Phosphorylase Kinase, domain 1"/>
    <property type="match status" value="1"/>
</dbReference>
<dbReference type="HAMAP" id="MF_00137">
    <property type="entry name" value="SAICAR_synth"/>
    <property type="match status" value="1"/>
</dbReference>
<dbReference type="InterPro" id="IPR028923">
    <property type="entry name" value="SAICAR_synt/ADE2_N"/>
</dbReference>
<dbReference type="InterPro" id="IPR001636">
    <property type="entry name" value="SAICAR_synth"/>
</dbReference>
<dbReference type="InterPro" id="IPR018236">
    <property type="entry name" value="SAICAR_synthetase_CS"/>
</dbReference>
<dbReference type="NCBIfam" id="NF010568">
    <property type="entry name" value="PRK13961.1"/>
    <property type="match status" value="1"/>
</dbReference>
<dbReference type="NCBIfam" id="TIGR00081">
    <property type="entry name" value="purC"/>
    <property type="match status" value="1"/>
</dbReference>
<dbReference type="PANTHER" id="PTHR43700">
    <property type="entry name" value="PHOSPHORIBOSYLAMINOIMIDAZOLE-SUCCINOCARBOXAMIDE SYNTHASE"/>
    <property type="match status" value="1"/>
</dbReference>
<dbReference type="PANTHER" id="PTHR43700:SF1">
    <property type="entry name" value="PHOSPHORIBOSYLAMINOIMIDAZOLE-SUCCINOCARBOXAMIDE SYNTHASE"/>
    <property type="match status" value="1"/>
</dbReference>
<dbReference type="Pfam" id="PF01259">
    <property type="entry name" value="SAICAR_synt"/>
    <property type="match status" value="1"/>
</dbReference>
<dbReference type="SUPFAM" id="SSF56104">
    <property type="entry name" value="SAICAR synthase-like"/>
    <property type="match status" value="1"/>
</dbReference>
<dbReference type="PROSITE" id="PS01057">
    <property type="entry name" value="SAICAR_SYNTHETASE_1"/>
    <property type="match status" value="1"/>
</dbReference>
<dbReference type="PROSITE" id="PS01058">
    <property type="entry name" value="SAICAR_SYNTHETASE_2"/>
    <property type="match status" value="1"/>
</dbReference>
<sequence length="302" mass="33396">MTNALYQSSINSLPLLGHGKVRDNYAVGNDKLLIVTTDRLSAFDVIMGEPIPDKGRVLNQMANFWFRKLAHIVPNHETGIAPETVVAADEVEQVRGRAVVVKRLKPILVEAVVRGYLAGSGWKDYQATGKVCGIELPPGLQNAQKLPEPIFTPAAKAEMGEHDENISFAEVEARIGIALARQMREISIRLYKEAAEFAATRGIIIADTKFEFGLDDNGVLTLMDEVLTADSSRFWPADSYQVGTNPPSFDKQFVRDWLEAVRIDGKPWPKTAPAPKLPDDVIEKTAAKYREALTRLTGEELK</sequence>
<accession>B2AHE3</accession>
<keyword id="KW-0067">ATP-binding</keyword>
<keyword id="KW-0436">Ligase</keyword>
<keyword id="KW-0547">Nucleotide-binding</keyword>
<keyword id="KW-0658">Purine biosynthesis</keyword>
<reference key="1">
    <citation type="journal article" date="2008" name="Genome Res.">
        <title>Genome sequence of the beta-rhizobium Cupriavidus taiwanensis and comparative genomics of rhizobia.</title>
        <authorList>
            <person name="Amadou C."/>
            <person name="Pascal G."/>
            <person name="Mangenot S."/>
            <person name="Glew M."/>
            <person name="Bontemps C."/>
            <person name="Capela D."/>
            <person name="Carrere S."/>
            <person name="Cruveiller S."/>
            <person name="Dossat C."/>
            <person name="Lajus A."/>
            <person name="Marchetti M."/>
            <person name="Poinsot V."/>
            <person name="Rouy Z."/>
            <person name="Servin B."/>
            <person name="Saad M."/>
            <person name="Schenowitz C."/>
            <person name="Barbe V."/>
            <person name="Batut J."/>
            <person name="Medigue C."/>
            <person name="Masson-Boivin C."/>
        </authorList>
    </citation>
    <scope>NUCLEOTIDE SEQUENCE [LARGE SCALE GENOMIC DNA]</scope>
    <source>
        <strain>DSM 17343 / BCRC 17206 / CCUG 44338 / CIP 107171 / LMG 19424 / R1</strain>
    </source>
</reference>